<proteinExistence type="inferred from homology"/>
<name>YOBA_ECOL6</name>
<reference key="1">
    <citation type="journal article" date="2002" name="Proc. Natl. Acad. Sci. U.S.A.">
        <title>Extensive mosaic structure revealed by the complete genome sequence of uropathogenic Escherichia coli.</title>
        <authorList>
            <person name="Welch R.A."/>
            <person name="Burland V."/>
            <person name="Plunkett G. III"/>
            <person name="Redford P."/>
            <person name="Roesch P."/>
            <person name="Rasko D."/>
            <person name="Buckles E.L."/>
            <person name="Liou S.-R."/>
            <person name="Boutin A."/>
            <person name="Hackett J."/>
            <person name="Stroud D."/>
            <person name="Mayhew G.F."/>
            <person name="Rose D.J."/>
            <person name="Zhou S."/>
            <person name="Schwartz D.C."/>
            <person name="Perna N.T."/>
            <person name="Mobley H.L.T."/>
            <person name="Donnenberg M.S."/>
            <person name="Blattner F.R."/>
        </authorList>
    </citation>
    <scope>NUCLEOTIDE SEQUENCE [LARGE SCALE GENOMIC DNA]</scope>
    <source>
        <strain>CFT073 / ATCC 700928 / UPEC</strain>
    </source>
</reference>
<accession>P0AA58</accession>
<accession>P76279</accession>
<sequence length="124" mass="13410">MASTARSLRYALAILTTSLVTPSVWAHAHLTHQYPAANAQVTAAPQAITLNFSEGVETGFSGAKITGPKNENIKTLPAKRNEQDQKQLIVPLADSLKPGTYTVDWHVVSVDGHKTKGHYTFSVK</sequence>
<gene>
    <name type="primary">yobA</name>
    <name type="ordered locus">c2251</name>
</gene>
<evidence type="ECO:0000250" key="1"/>
<evidence type="ECO:0000255" key="2"/>
<evidence type="ECO:0000305" key="3"/>
<feature type="signal peptide" evidence="2">
    <location>
        <begin position="1"/>
        <end position="26"/>
    </location>
</feature>
<feature type="chain" id="PRO_0000041960" description="Protein YobA">
    <location>
        <begin position="27"/>
        <end position="124"/>
    </location>
</feature>
<feature type="binding site" evidence="2">
    <location>
        <position position="27"/>
    </location>
    <ligand>
        <name>Cu cation</name>
        <dbReference type="ChEBI" id="CHEBI:23378"/>
    </ligand>
</feature>
<feature type="binding site" evidence="2">
    <location>
        <position position="113"/>
    </location>
    <ligand>
        <name>Cu cation</name>
        <dbReference type="ChEBI" id="CHEBI:23378"/>
    </ligand>
</feature>
<organism>
    <name type="scientific">Escherichia coli O6:H1 (strain CFT073 / ATCC 700928 / UPEC)</name>
    <dbReference type="NCBI Taxonomy" id="199310"/>
    <lineage>
        <taxon>Bacteria</taxon>
        <taxon>Pseudomonadati</taxon>
        <taxon>Pseudomonadota</taxon>
        <taxon>Gammaproteobacteria</taxon>
        <taxon>Enterobacterales</taxon>
        <taxon>Enterobacteriaceae</taxon>
        <taxon>Escherichia</taxon>
    </lineage>
</organism>
<dbReference type="EMBL" id="AE014075">
    <property type="protein sequence ID" value="AAN80710.1"/>
    <property type="molecule type" value="Genomic_DNA"/>
</dbReference>
<dbReference type="RefSeq" id="WP_000168747.1">
    <property type="nucleotide sequence ID" value="NZ_CP051263.1"/>
</dbReference>
<dbReference type="SMR" id="P0AA58"/>
<dbReference type="STRING" id="199310.c2251"/>
<dbReference type="GeneID" id="75171912"/>
<dbReference type="KEGG" id="ecc:c2251"/>
<dbReference type="eggNOG" id="COG2372">
    <property type="taxonomic scope" value="Bacteria"/>
</dbReference>
<dbReference type="HOGENOM" id="CLU_087859_4_2_6"/>
<dbReference type="BioCyc" id="ECOL199310:C2251-MONOMER"/>
<dbReference type="Proteomes" id="UP000001410">
    <property type="component" value="Chromosome"/>
</dbReference>
<dbReference type="GO" id="GO:0042597">
    <property type="term" value="C:periplasmic space"/>
    <property type="evidence" value="ECO:0007669"/>
    <property type="project" value="UniProtKB-SubCell"/>
</dbReference>
<dbReference type="GO" id="GO:0005886">
    <property type="term" value="C:plasma membrane"/>
    <property type="evidence" value="ECO:0007669"/>
    <property type="project" value="TreeGrafter"/>
</dbReference>
<dbReference type="GO" id="GO:0005507">
    <property type="term" value="F:copper ion binding"/>
    <property type="evidence" value="ECO:0007669"/>
    <property type="project" value="InterPro"/>
</dbReference>
<dbReference type="GO" id="GO:0006825">
    <property type="term" value="P:copper ion transport"/>
    <property type="evidence" value="ECO:0007669"/>
    <property type="project" value="InterPro"/>
</dbReference>
<dbReference type="GO" id="GO:0046688">
    <property type="term" value="P:response to copper ion"/>
    <property type="evidence" value="ECO:0007669"/>
    <property type="project" value="InterPro"/>
</dbReference>
<dbReference type="FunFam" id="2.60.40.1220:FF:000001">
    <property type="entry name" value="CopC domain-containing protein YobA"/>
    <property type="match status" value="1"/>
</dbReference>
<dbReference type="Gene3D" id="2.60.40.1220">
    <property type="match status" value="1"/>
</dbReference>
<dbReference type="InterPro" id="IPR047685">
    <property type="entry name" value="CopC-like"/>
</dbReference>
<dbReference type="InterPro" id="IPR032694">
    <property type="entry name" value="CopC/D"/>
</dbReference>
<dbReference type="InterPro" id="IPR007348">
    <property type="entry name" value="CopC_dom"/>
</dbReference>
<dbReference type="InterPro" id="IPR014755">
    <property type="entry name" value="Cu-Rt/internalin_Ig-like"/>
</dbReference>
<dbReference type="InterPro" id="IPR014756">
    <property type="entry name" value="Ig_E-set"/>
</dbReference>
<dbReference type="NCBIfam" id="NF033814">
    <property type="entry name" value="copper_CopC"/>
    <property type="match status" value="1"/>
</dbReference>
<dbReference type="NCBIfam" id="NF007636">
    <property type="entry name" value="PRK10301.1"/>
    <property type="match status" value="1"/>
</dbReference>
<dbReference type="PANTHER" id="PTHR34820">
    <property type="entry name" value="INNER MEMBRANE PROTEIN YEBZ"/>
    <property type="match status" value="1"/>
</dbReference>
<dbReference type="PANTHER" id="PTHR34820:SF4">
    <property type="entry name" value="INNER MEMBRANE PROTEIN YEBZ"/>
    <property type="match status" value="1"/>
</dbReference>
<dbReference type="Pfam" id="PF04234">
    <property type="entry name" value="CopC"/>
    <property type="match status" value="1"/>
</dbReference>
<dbReference type="SUPFAM" id="SSF81296">
    <property type="entry name" value="E set domains"/>
    <property type="match status" value="1"/>
</dbReference>
<protein>
    <recommendedName>
        <fullName>Protein YobA</fullName>
    </recommendedName>
</protein>
<comment type="subcellular location">
    <subcellularLocation>
        <location evidence="1">Periplasm</location>
    </subcellularLocation>
</comment>
<comment type="similarity">
    <text evidence="3">Belongs to the CopC family.</text>
</comment>
<keyword id="KW-0186">Copper</keyword>
<keyword id="KW-0479">Metal-binding</keyword>
<keyword id="KW-0574">Periplasm</keyword>
<keyword id="KW-1185">Reference proteome</keyword>
<keyword id="KW-0732">Signal</keyword>